<organism>
    <name type="scientific">Escherichia coli (strain 55989 / EAEC)</name>
    <dbReference type="NCBI Taxonomy" id="585055"/>
    <lineage>
        <taxon>Bacteria</taxon>
        <taxon>Pseudomonadati</taxon>
        <taxon>Pseudomonadota</taxon>
        <taxon>Gammaproteobacteria</taxon>
        <taxon>Enterobacterales</taxon>
        <taxon>Enterobacteriaceae</taxon>
        <taxon>Escherichia</taxon>
    </lineage>
</organism>
<name>YAFD_ECO55</name>
<accession>B7LHB5</accession>
<dbReference type="EMBL" id="CU928145">
    <property type="protein sequence ID" value="CAU96088.1"/>
    <property type="molecule type" value="Genomic_DNA"/>
</dbReference>
<dbReference type="RefSeq" id="WP_001230983.1">
    <property type="nucleotide sequence ID" value="NZ_CP028304.1"/>
</dbReference>
<dbReference type="SMR" id="B7LHB5"/>
<dbReference type="KEGG" id="eck:EC55989_0208"/>
<dbReference type="HOGENOM" id="CLU_083563_0_0_6"/>
<dbReference type="Proteomes" id="UP000000746">
    <property type="component" value="Chromosome"/>
</dbReference>
<dbReference type="GO" id="GO:0005737">
    <property type="term" value="C:cytoplasm"/>
    <property type="evidence" value="ECO:0007669"/>
    <property type="project" value="UniProtKB-SubCell"/>
</dbReference>
<dbReference type="GO" id="GO:0003824">
    <property type="term" value="F:catalytic activity"/>
    <property type="evidence" value="ECO:0007669"/>
    <property type="project" value="InterPro"/>
</dbReference>
<dbReference type="Gene3D" id="3.60.10.10">
    <property type="entry name" value="Endonuclease/exonuclease/phosphatase"/>
    <property type="match status" value="1"/>
</dbReference>
<dbReference type="HAMAP" id="MF_01119">
    <property type="entry name" value="UPF0294"/>
    <property type="match status" value="1"/>
</dbReference>
<dbReference type="InterPro" id="IPR036691">
    <property type="entry name" value="Endo/exonu/phosph_ase_sf"/>
</dbReference>
<dbReference type="InterPro" id="IPR005135">
    <property type="entry name" value="Endo/exonuclease/phosphatase"/>
</dbReference>
<dbReference type="InterPro" id="IPR022958">
    <property type="entry name" value="UPF0294"/>
</dbReference>
<dbReference type="NCBIfam" id="NF003839">
    <property type="entry name" value="PRK05421.1-1"/>
    <property type="match status" value="1"/>
</dbReference>
<dbReference type="NCBIfam" id="NF003840">
    <property type="entry name" value="PRK05421.1-2"/>
    <property type="match status" value="1"/>
</dbReference>
<dbReference type="NCBIfam" id="NF003841">
    <property type="entry name" value="PRK05421.1-3"/>
    <property type="match status" value="1"/>
</dbReference>
<dbReference type="NCBIfam" id="NF003842">
    <property type="entry name" value="PRK05421.1-4"/>
    <property type="match status" value="1"/>
</dbReference>
<dbReference type="Pfam" id="PF03372">
    <property type="entry name" value="Exo_endo_phos"/>
    <property type="match status" value="1"/>
</dbReference>
<dbReference type="SUPFAM" id="SSF56219">
    <property type="entry name" value="DNase I-like"/>
    <property type="match status" value="1"/>
</dbReference>
<feature type="chain" id="PRO_1000164041" description="UPF0294 protein YafD">
    <location>
        <begin position="1"/>
        <end position="266"/>
    </location>
</feature>
<proteinExistence type="inferred from homology"/>
<reference key="1">
    <citation type="journal article" date="2009" name="PLoS Genet.">
        <title>Organised genome dynamics in the Escherichia coli species results in highly diverse adaptive paths.</title>
        <authorList>
            <person name="Touchon M."/>
            <person name="Hoede C."/>
            <person name="Tenaillon O."/>
            <person name="Barbe V."/>
            <person name="Baeriswyl S."/>
            <person name="Bidet P."/>
            <person name="Bingen E."/>
            <person name="Bonacorsi S."/>
            <person name="Bouchier C."/>
            <person name="Bouvet O."/>
            <person name="Calteau A."/>
            <person name="Chiapello H."/>
            <person name="Clermont O."/>
            <person name="Cruveiller S."/>
            <person name="Danchin A."/>
            <person name="Diard M."/>
            <person name="Dossat C."/>
            <person name="Karoui M.E."/>
            <person name="Frapy E."/>
            <person name="Garry L."/>
            <person name="Ghigo J.M."/>
            <person name="Gilles A.M."/>
            <person name="Johnson J."/>
            <person name="Le Bouguenec C."/>
            <person name="Lescat M."/>
            <person name="Mangenot S."/>
            <person name="Martinez-Jehanne V."/>
            <person name="Matic I."/>
            <person name="Nassif X."/>
            <person name="Oztas S."/>
            <person name="Petit M.A."/>
            <person name="Pichon C."/>
            <person name="Rouy Z."/>
            <person name="Ruf C.S."/>
            <person name="Schneider D."/>
            <person name="Tourret J."/>
            <person name="Vacherie B."/>
            <person name="Vallenet D."/>
            <person name="Medigue C."/>
            <person name="Rocha E.P.C."/>
            <person name="Denamur E."/>
        </authorList>
    </citation>
    <scope>NUCLEOTIDE SEQUENCE [LARGE SCALE GENOMIC DNA]</scope>
    <source>
        <strain>55989 / EAEC</strain>
    </source>
</reference>
<keyword id="KW-0963">Cytoplasm</keyword>
<keyword id="KW-1185">Reference proteome</keyword>
<sequence length="266" mass="29992">MRKNTYAMRYVAGQPAERILPPGSFASIGQALPPGEPLSTEERIRILVWNIYKQQRAEWLSVLKNYGKDAHLVLLQEAQTTPELVQFATANYLAADQVPAFVLPQHPSGVMTLSAAHPVYCCPLREREPILRLAKSALVTVYPLPDTRLLMVVNIHAVNFSLGVDVYSKQLLPIGDQIAHHSGPVIMAGDFNAWSRRRMNALYRFAREMSLRQVRFTDDQRRRAFGRPLDFVFYRGLNVSEASVLVTRASDHNPLLVEFSPGKPDK</sequence>
<protein>
    <recommendedName>
        <fullName evidence="1">UPF0294 protein YafD</fullName>
    </recommendedName>
</protein>
<gene>
    <name evidence="1" type="primary">yafD</name>
    <name type="ordered locus">EC55989_0208</name>
</gene>
<comment type="subcellular location">
    <subcellularLocation>
        <location evidence="1">Cytoplasm</location>
    </subcellularLocation>
</comment>
<comment type="similarity">
    <text evidence="1">Belongs to the UPF0294 family.</text>
</comment>
<evidence type="ECO:0000255" key="1">
    <source>
        <dbReference type="HAMAP-Rule" id="MF_01119"/>
    </source>
</evidence>